<feature type="chain" id="PRO_0000176079" description="Uracil-DNA glycosylase">
    <location>
        <begin position="1"/>
        <end position="221"/>
    </location>
</feature>
<feature type="active site" description="Proton acceptor" evidence="1">
    <location>
        <position position="63"/>
    </location>
</feature>
<name>UNG_BLOFL</name>
<proteinExistence type="inferred from homology"/>
<keyword id="KW-0963">Cytoplasm</keyword>
<keyword id="KW-0227">DNA damage</keyword>
<keyword id="KW-0234">DNA repair</keyword>
<keyword id="KW-0378">Hydrolase</keyword>
<keyword id="KW-1185">Reference proteome</keyword>
<dbReference type="EC" id="3.2.2.27" evidence="1"/>
<dbReference type="EMBL" id="BX248583">
    <property type="protein sequence ID" value="CAD83229.1"/>
    <property type="molecule type" value="Genomic_DNA"/>
</dbReference>
<dbReference type="SMR" id="Q7VRQ7"/>
<dbReference type="STRING" id="203907.Bfl543"/>
<dbReference type="KEGG" id="bfl:Bfl543"/>
<dbReference type="eggNOG" id="COG0692">
    <property type="taxonomic scope" value="Bacteria"/>
</dbReference>
<dbReference type="HOGENOM" id="CLU_032162_3_0_6"/>
<dbReference type="OrthoDB" id="9804372at2"/>
<dbReference type="Proteomes" id="UP000002192">
    <property type="component" value="Chromosome"/>
</dbReference>
<dbReference type="GO" id="GO:0005737">
    <property type="term" value="C:cytoplasm"/>
    <property type="evidence" value="ECO:0007669"/>
    <property type="project" value="UniProtKB-SubCell"/>
</dbReference>
<dbReference type="GO" id="GO:0004844">
    <property type="term" value="F:uracil DNA N-glycosylase activity"/>
    <property type="evidence" value="ECO:0007669"/>
    <property type="project" value="UniProtKB-UniRule"/>
</dbReference>
<dbReference type="GO" id="GO:0097510">
    <property type="term" value="P:base-excision repair, AP site formation via deaminated base removal"/>
    <property type="evidence" value="ECO:0007669"/>
    <property type="project" value="TreeGrafter"/>
</dbReference>
<dbReference type="CDD" id="cd10027">
    <property type="entry name" value="UDG-F1-like"/>
    <property type="match status" value="1"/>
</dbReference>
<dbReference type="FunFam" id="3.40.470.10:FF:000001">
    <property type="entry name" value="Uracil-DNA glycosylase"/>
    <property type="match status" value="1"/>
</dbReference>
<dbReference type="Gene3D" id="3.40.470.10">
    <property type="entry name" value="Uracil-DNA glycosylase-like domain"/>
    <property type="match status" value="1"/>
</dbReference>
<dbReference type="HAMAP" id="MF_00148">
    <property type="entry name" value="UDG"/>
    <property type="match status" value="1"/>
</dbReference>
<dbReference type="InterPro" id="IPR002043">
    <property type="entry name" value="UDG_fam1"/>
</dbReference>
<dbReference type="InterPro" id="IPR018085">
    <property type="entry name" value="Ura-DNA_Glyclase_AS"/>
</dbReference>
<dbReference type="InterPro" id="IPR005122">
    <property type="entry name" value="Uracil-DNA_glycosylase-like"/>
</dbReference>
<dbReference type="InterPro" id="IPR036895">
    <property type="entry name" value="Uracil-DNA_glycosylase-like_sf"/>
</dbReference>
<dbReference type="NCBIfam" id="NF003588">
    <property type="entry name" value="PRK05254.1-1"/>
    <property type="match status" value="1"/>
</dbReference>
<dbReference type="NCBIfam" id="NF003589">
    <property type="entry name" value="PRK05254.1-2"/>
    <property type="match status" value="1"/>
</dbReference>
<dbReference type="NCBIfam" id="NF003591">
    <property type="entry name" value="PRK05254.1-4"/>
    <property type="match status" value="1"/>
</dbReference>
<dbReference type="NCBIfam" id="NF003592">
    <property type="entry name" value="PRK05254.1-5"/>
    <property type="match status" value="1"/>
</dbReference>
<dbReference type="NCBIfam" id="TIGR00628">
    <property type="entry name" value="ung"/>
    <property type="match status" value="1"/>
</dbReference>
<dbReference type="PANTHER" id="PTHR11264">
    <property type="entry name" value="URACIL-DNA GLYCOSYLASE"/>
    <property type="match status" value="1"/>
</dbReference>
<dbReference type="PANTHER" id="PTHR11264:SF0">
    <property type="entry name" value="URACIL-DNA GLYCOSYLASE"/>
    <property type="match status" value="1"/>
</dbReference>
<dbReference type="Pfam" id="PF03167">
    <property type="entry name" value="UDG"/>
    <property type="match status" value="1"/>
</dbReference>
<dbReference type="SMART" id="SM00986">
    <property type="entry name" value="UDG"/>
    <property type="match status" value="1"/>
</dbReference>
<dbReference type="SMART" id="SM00987">
    <property type="entry name" value="UreE_C"/>
    <property type="match status" value="1"/>
</dbReference>
<dbReference type="SUPFAM" id="SSF52141">
    <property type="entry name" value="Uracil-DNA glycosylase-like"/>
    <property type="match status" value="1"/>
</dbReference>
<dbReference type="PROSITE" id="PS00130">
    <property type="entry name" value="U_DNA_GLYCOSYLASE"/>
    <property type="match status" value="1"/>
</dbReference>
<evidence type="ECO:0000255" key="1">
    <source>
        <dbReference type="HAMAP-Rule" id="MF_00148"/>
    </source>
</evidence>
<organism>
    <name type="scientific">Blochmanniella floridana</name>
    <dbReference type="NCBI Taxonomy" id="203907"/>
    <lineage>
        <taxon>Bacteria</taxon>
        <taxon>Pseudomonadati</taxon>
        <taxon>Pseudomonadota</taxon>
        <taxon>Gammaproteobacteria</taxon>
        <taxon>Enterobacterales</taxon>
        <taxon>Enterobacteriaceae</taxon>
        <taxon>ant endosymbionts</taxon>
        <taxon>Candidatus Blochmanniella</taxon>
    </lineage>
</organism>
<protein>
    <recommendedName>
        <fullName evidence="1">Uracil-DNA glycosylase</fullName>
        <shortName evidence="1">UDG</shortName>
        <ecNumber evidence="1">3.2.2.27</ecNumber>
    </recommendedName>
</protein>
<reference key="1">
    <citation type="journal article" date="2003" name="Proc. Natl. Acad. Sci. U.S.A.">
        <title>The genome sequence of Blochmannia floridanus: comparative analysis of reduced genomes.</title>
        <authorList>
            <person name="Gil R."/>
            <person name="Silva F.J."/>
            <person name="Zientz E."/>
            <person name="Delmotte F."/>
            <person name="Gonzalez-Candelas F."/>
            <person name="Latorre A."/>
            <person name="Rausell C."/>
            <person name="Kamerbeek J."/>
            <person name="Gadau J."/>
            <person name="Hoelldobler B."/>
            <person name="van Ham R.C.H.J."/>
            <person name="Gross R."/>
            <person name="Moya A."/>
        </authorList>
    </citation>
    <scope>NUCLEOTIDE SEQUENCE [LARGE SCALE GENOMIC DNA]</scope>
</reference>
<gene>
    <name evidence="1" type="primary">ung</name>
    <name type="ordered locus">Bfl543</name>
</gene>
<sequence>MPKLTWQLLLSQEKNLPYFKNIFTILNQQKKSGKIIYPKQNDIFNVFRFTAFESIKVVIIGQDPYHGYNQAHGLAFSVPHGIPLPPSLKNIYKELETDIPGFIKPQHGCLSSWSKEGVFLLNSILTVEQGKSRSHAHIGWELFTDKVIHTLNTYRQNLVFLLWGKHAQQKSHIINNQKHHILITSHPSPISAKYGFLGCKHFSKTNTFLANQNQHIINWQL</sequence>
<accession>Q7VRQ7</accession>
<comment type="function">
    <text evidence="1">Excises uracil residues from the DNA which can arise as a result of misincorporation of dUMP residues by DNA polymerase or due to deamination of cytosine.</text>
</comment>
<comment type="catalytic activity">
    <reaction evidence="1">
        <text>Hydrolyzes single-stranded DNA or mismatched double-stranded DNA and polynucleotides, releasing free uracil.</text>
        <dbReference type="EC" id="3.2.2.27"/>
    </reaction>
</comment>
<comment type="subcellular location">
    <subcellularLocation>
        <location evidence="1">Cytoplasm</location>
    </subcellularLocation>
</comment>
<comment type="similarity">
    <text evidence="1">Belongs to the uracil-DNA glycosylase (UDG) superfamily. UNG family.</text>
</comment>